<gene>
    <name type="primary">cysO</name>
    <name type="ordered locus">APE_1586</name>
</gene>
<dbReference type="EC" id="4.2.1.22" evidence="1 2"/>
<dbReference type="EC" id="2.5.1.47" evidence="1"/>
<dbReference type="EC" id="2.5.1.65" evidence="2"/>
<dbReference type="EMBL" id="BA000002">
    <property type="protein sequence ID" value="BAA80586.1"/>
    <property type="molecule type" value="Genomic_DNA"/>
</dbReference>
<dbReference type="PIR" id="E72537">
    <property type="entry name" value="E72537"/>
</dbReference>
<dbReference type="RefSeq" id="WP_010866467.1">
    <property type="nucleotide sequence ID" value="NC_000854.2"/>
</dbReference>
<dbReference type="PDB" id="1WKV">
    <property type="method" value="X-ray"/>
    <property type="resolution" value="2.00 A"/>
    <property type="chains" value="A/B=1-389"/>
</dbReference>
<dbReference type="PDB" id="3VSA">
    <property type="method" value="X-ray"/>
    <property type="resolution" value="2.07 A"/>
    <property type="chains" value="A/B=1-389"/>
</dbReference>
<dbReference type="PDB" id="3VSC">
    <property type="method" value="X-ray"/>
    <property type="resolution" value="2.07 A"/>
    <property type="chains" value="A/B=1-389"/>
</dbReference>
<dbReference type="PDB" id="3VSD">
    <property type="method" value="X-ray"/>
    <property type="resolution" value="2.09 A"/>
    <property type="chains" value="A/B=1-389"/>
</dbReference>
<dbReference type="PDB" id="5B36">
    <property type="method" value="X-ray"/>
    <property type="resolution" value="2.15 A"/>
    <property type="chains" value="A/B=1-389"/>
</dbReference>
<dbReference type="PDB" id="5B3A">
    <property type="method" value="X-ray"/>
    <property type="resolution" value="2.14 A"/>
    <property type="chains" value="A/B=1-389"/>
</dbReference>
<dbReference type="PDB" id="6L0P">
    <property type="method" value="X-ray"/>
    <property type="resolution" value="1.79 A"/>
    <property type="chains" value="A/B/C/D=1-389"/>
</dbReference>
<dbReference type="PDB" id="6L0Q">
    <property type="method" value="X-ray"/>
    <property type="resolution" value="1.58 A"/>
    <property type="chains" value="A/B/C/D=1-389"/>
</dbReference>
<dbReference type="PDB" id="6L0R">
    <property type="method" value="X-ray"/>
    <property type="resolution" value="1.79 A"/>
    <property type="chains" value="A/B/C/D=1-389"/>
</dbReference>
<dbReference type="PDB" id="6L0S">
    <property type="method" value="X-ray"/>
    <property type="resolution" value="1.96 A"/>
    <property type="chains" value="A/B/C/D=1-389"/>
</dbReference>
<dbReference type="PDBsum" id="1WKV"/>
<dbReference type="PDBsum" id="3VSA"/>
<dbReference type="PDBsum" id="3VSC"/>
<dbReference type="PDBsum" id="3VSD"/>
<dbReference type="PDBsum" id="5B36"/>
<dbReference type="PDBsum" id="5B3A"/>
<dbReference type="PDBsum" id="6L0P"/>
<dbReference type="PDBsum" id="6L0Q"/>
<dbReference type="PDBsum" id="6L0R"/>
<dbReference type="PDBsum" id="6L0S"/>
<dbReference type="SMR" id="Q9YBL2"/>
<dbReference type="STRING" id="272557.APE_1586"/>
<dbReference type="EnsemblBacteria" id="BAA80586">
    <property type="protein sequence ID" value="BAA80586"/>
    <property type="gene ID" value="APE_1586"/>
</dbReference>
<dbReference type="GeneID" id="1446114"/>
<dbReference type="KEGG" id="ape:APE_1586"/>
<dbReference type="PATRIC" id="fig|272557.25.peg.1071"/>
<dbReference type="eggNOG" id="arCOG01430">
    <property type="taxonomic scope" value="Archaea"/>
</dbReference>
<dbReference type="BioCyc" id="MetaCyc:MONOMER-20567"/>
<dbReference type="BRENDA" id="2.5.1.47">
    <property type="organism ID" value="171"/>
</dbReference>
<dbReference type="BRENDA" id="2.5.1.65">
    <property type="organism ID" value="171"/>
</dbReference>
<dbReference type="SABIO-RK" id="Q9YBL2"/>
<dbReference type="UniPathway" id="UPA00136">
    <property type="reaction ID" value="UER00200"/>
</dbReference>
<dbReference type="EvolutionaryTrace" id="Q9YBL2"/>
<dbReference type="Proteomes" id="UP000002518">
    <property type="component" value="Chromosome"/>
</dbReference>
<dbReference type="GO" id="GO:0004122">
    <property type="term" value="F:cystathionine beta-synthase activity"/>
    <property type="evidence" value="ECO:0007669"/>
    <property type="project" value="UniProtKB-EC"/>
</dbReference>
<dbReference type="GO" id="GO:0004124">
    <property type="term" value="F:cysteine synthase activity"/>
    <property type="evidence" value="ECO:0007669"/>
    <property type="project" value="UniProtKB-EC"/>
</dbReference>
<dbReference type="GO" id="GO:0033847">
    <property type="term" value="F:O-phosphoserine sulfhydrylase activity"/>
    <property type="evidence" value="ECO:0007669"/>
    <property type="project" value="UniProtKB-EC"/>
</dbReference>
<dbReference type="GO" id="GO:0006535">
    <property type="term" value="P:cysteine biosynthetic process from serine"/>
    <property type="evidence" value="ECO:0007669"/>
    <property type="project" value="InterPro"/>
</dbReference>
<dbReference type="Gene3D" id="3.40.50.1100">
    <property type="match status" value="2"/>
</dbReference>
<dbReference type="Gene3D" id="3.90.1530.20">
    <property type="match status" value="1"/>
</dbReference>
<dbReference type="InterPro" id="IPR050214">
    <property type="entry name" value="Cys_Synth/Cystath_Beta-Synth"/>
</dbReference>
<dbReference type="InterPro" id="IPR001216">
    <property type="entry name" value="P-phosphate_BS"/>
</dbReference>
<dbReference type="InterPro" id="IPR001926">
    <property type="entry name" value="TrpB-like_PALP"/>
</dbReference>
<dbReference type="InterPro" id="IPR036052">
    <property type="entry name" value="TrpB-like_PALP_sf"/>
</dbReference>
<dbReference type="PANTHER" id="PTHR10314">
    <property type="entry name" value="CYSTATHIONINE BETA-SYNTHASE"/>
    <property type="match status" value="1"/>
</dbReference>
<dbReference type="Pfam" id="PF00291">
    <property type="entry name" value="PALP"/>
    <property type="match status" value="1"/>
</dbReference>
<dbReference type="SUPFAM" id="SSF53686">
    <property type="entry name" value="Tryptophan synthase beta subunit-like PLP-dependent enzymes"/>
    <property type="match status" value="1"/>
</dbReference>
<dbReference type="PROSITE" id="PS00901">
    <property type="entry name" value="CYS_SYNTHASE"/>
    <property type="match status" value="1"/>
</dbReference>
<evidence type="ECO:0000269" key="1">
    <source>
    </source>
</evidence>
<evidence type="ECO:0000269" key="2">
    <source>
    </source>
</evidence>
<evidence type="ECO:0000303" key="3">
    <source>
    </source>
</evidence>
<evidence type="ECO:0000303" key="4">
    <source>
    </source>
</evidence>
<evidence type="ECO:0000305" key="5"/>
<evidence type="ECO:0007829" key="6">
    <source>
        <dbReference type="PDB" id="1WKV"/>
    </source>
</evidence>
<evidence type="ECO:0007829" key="7">
    <source>
        <dbReference type="PDB" id="6L0P"/>
    </source>
</evidence>
<evidence type="ECO:0007829" key="8">
    <source>
        <dbReference type="PDB" id="6L0Q"/>
    </source>
</evidence>
<comment type="function">
    <text evidence="1">Cysteine synthase that can also catalyze the synthesis of S-sulfo-L-cysteine from thiosulfate and O(3)-acetyl-L-serine, as well as the sulfhydrylation of L-serine by sulfide.</text>
</comment>
<comment type="catalytic activity">
    <reaction evidence="1">
        <text>O-acetyl-L-serine + hydrogen sulfide = L-cysteine + acetate</text>
        <dbReference type="Rhea" id="RHEA:14829"/>
        <dbReference type="ChEBI" id="CHEBI:29919"/>
        <dbReference type="ChEBI" id="CHEBI:30089"/>
        <dbReference type="ChEBI" id="CHEBI:35235"/>
        <dbReference type="ChEBI" id="CHEBI:58340"/>
        <dbReference type="EC" id="2.5.1.47"/>
    </reaction>
</comment>
<comment type="catalytic activity">
    <reaction evidence="2">
        <text>O-phospho-L-serine + hydrogen sulfide + H(+) = L-cysteine + phosphate</text>
        <dbReference type="Rhea" id="RHEA:10252"/>
        <dbReference type="ChEBI" id="CHEBI:15378"/>
        <dbReference type="ChEBI" id="CHEBI:29919"/>
        <dbReference type="ChEBI" id="CHEBI:35235"/>
        <dbReference type="ChEBI" id="CHEBI:43474"/>
        <dbReference type="ChEBI" id="CHEBI:57524"/>
        <dbReference type="EC" id="2.5.1.65"/>
    </reaction>
</comment>
<comment type="catalytic activity">
    <reaction evidence="1 2">
        <text>L-homocysteine + L-serine = L,L-cystathionine + H2O</text>
        <dbReference type="Rhea" id="RHEA:10112"/>
        <dbReference type="ChEBI" id="CHEBI:15377"/>
        <dbReference type="ChEBI" id="CHEBI:33384"/>
        <dbReference type="ChEBI" id="CHEBI:58161"/>
        <dbReference type="ChEBI" id="CHEBI:58199"/>
        <dbReference type="EC" id="4.2.1.22"/>
    </reaction>
</comment>
<comment type="cofactor">
    <cofactor evidence="1">
        <name>pyridoxal 5'-phosphate</name>
        <dbReference type="ChEBI" id="CHEBI:597326"/>
    </cofactor>
</comment>
<comment type="biophysicochemical properties">
    <kinetics>
        <KM evidence="1">28 mM for O(3)-acetyl-L-serine (in the presence of 1 mM sodium sulfide at pH 6.7 and 60 degrees Celsius)</KM>
        <KM evidence="1">0.2 mM for sulfide (in the presence of 20 mM O(3)-acetyl-L-serine at pH 6.7 and 60 degrees Celsius)</KM>
        <KM evidence="1">8 mM for L-serine (in the presence of 0.7 mM L-homocysteine at pH 8.3 and 85 degrees Celsius)</KM>
        <KM evidence="1">0.5 mM for L-homocysteine (in the presence of 30 mM L-serine at pH 8.3 and 85 degrees Celsius)</KM>
        <KM evidence="1">0.2 mM for sulfide (in the presence of 20 mM L-serine at pH 8.5 and 70 degrees Celsius)</KM>
        <KM evidence="1">31 mM for L-serine (in the presence of 1 mM sodium sulfide at pH 8.5 and 70 degrees Celsius)</KM>
        <KM evidence="1">13 mM for O(3)-acetyl-L-serine (in the presence of 20 mM thiosulfate at pH 6.1 and 85 degrees Celsius)</KM>
        <KM evidence="1">21 mM for thiosulfate (in the presence of 20 mM O(3)-acetyl-L-serine at pH 6.1 and 85 degrees Celsius)</KM>
    </kinetics>
    <phDependence>
        <text evidence="1">Optimum pH is 6.7 for O-acetylserine sulfhydrylase A activity and 8.1-8.8 for cystathionine beta-synthase activity.</text>
    </phDependence>
    <temperatureDependence>
        <text evidence="1">Optimum temperature is above 90 degrees Celsius for S-sulfo-L-cysteine synthase activity, 70-80 degrees Celsius for O-acetylserine sulfhydrylase A activity, and 80 degrees Celsius for both cystathionine beta-synthase and L-serine sulfhdrylase activities.</text>
    </temperatureDependence>
</comment>
<comment type="pathway">
    <text>Amino-acid biosynthesis; L-cysteine biosynthesis; L-cysteine from L-serine: step 2/2.</text>
</comment>
<comment type="subunit">
    <text evidence="1 2">Homodimer.</text>
</comment>
<comment type="similarity">
    <text evidence="5">Belongs to the cysteine synthase/cystathionine beta-synthase family.</text>
</comment>
<protein>
    <recommendedName>
        <fullName>Protein CysO</fullName>
    </recommendedName>
    <alternativeName>
        <fullName>Cystathionine beta-synthase</fullName>
        <ecNumber evidence="1 2">4.2.1.22</ecNumber>
    </alternativeName>
    <alternativeName>
        <fullName>Cysteine synthase</fullName>
        <ecNumber evidence="1">2.5.1.47</ecNumber>
    </alternativeName>
    <alternativeName>
        <fullName evidence="3">O-acetylserine sulfhydrylase</fullName>
    </alternativeName>
    <alternativeName>
        <fullName evidence="4">O-phosphoserine sulfhydrylase</fullName>
        <ecNumber evidence="2">2.5.1.65</ecNumber>
    </alternativeName>
    <alternativeName>
        <fullName>Serine sulfhydrase</fullName>
    </alternativeName>
</protein>
<feature type="initiator methionine" description="Removed" evidence="1">
    <location>
        <position position="1"/>
    </location>
</feature>
<feature type="chain" id="PRO_0000167131" description="Protein CysO">
    <location>
        <begin position="2"/>
        <end position="389"/>
    </location>
</feature>
<feature type="binding site" evidence="2">
    <location>
        <position position="155"/>
    </location>
    <ligand>
        <name>pyridoxal 5'-phosphate</name>
        <dbReference type="ChEBI" id="CHEBI:597326"/>
    </ligand>
</feature>
<feature type="binding site">
    <location>
        <begin position="261"/>
        <end position="265"/>
    </location>
    <ligand>
        <name>pyridoxal 5'-phosphate</name>
        <dbReference type="ChEBI" id="CHEBI:597326"/>
    </ligand>
</feature>
<feature type="binding site" evidence="2">
    <location>
        <position position="341"/>
    </location>
    <ligand>
        <name>pyridoxal 5'-phosphate</name>
        <dbReference type="ChEBI" id="CHEBI:597326"/>
    </ligand>
</feature>
<feature type="modified residue" description="N6-(pyridoxal phosphate)lysine">
    <location>
        <position position="127"/>
    </location>
</feature>
<feature type="strand" evidence="8">
    <location>
        <begin position="3"/>
        <end position="5"/>
    </location>
</feature>
<feature type="helix" evidence="8">
    <location>
        <begin position="6"/>
        <end position="8"/>
    </location>
</feature>
<feature type="helix" evidence="8">
    <location>
        <begin position="12"/>
        <end position="15"/>
    </location>
</feature>
<feature type="helix" evidence="8">
    <location>
        <begin position="21"/>
        <end position="31"/>
    </location>
</feature>
<feature type="strand" evidence="8">
    <location>
        <begin position="32"/>
        <end position="34"/>
    </location>
</feature>
<feature type="strand" evidence="8">
    <location>
        <begin position="37"/>
        <end position="40"/>
    </location>
</feature>
<feature type="helix" evidence="8">
    <location>
        <begin position="44"/>
        <end position="53"/>
    </location>
</feature>
<feature type="strand" evidence="8">
    <location>
        <begin position="56"/>
        <end position="63"/>
    </location>
</feature>
<feature type="strand" evidence="7">
    <location>
        <begin position="65"/>
        <end position="67"/>
    </location>
</feature>
<feature type="turn" evidence="8">
    <location>
        <begin position="68"/>
        <end position="74"/>
    </location>
</feature>
<feature type="strand" evidence="8">
    <location>
        <begin position="83"/>
        <end position="86"/>
    </location>
</feature>
<feature type="helix" evidence="8">
    <location>
        <begin position="87"/>
        <end position="93"/>
    </location>
</feature>
<feature type="strand" evidence="8">
    <location>
        <begin position="99"/>
        <end position="101"/>
    </location>
</feature>
<feature type="turn" evidence="7">
    <location>
        <begin position="107"/>
        <end position="109"/>
    </location>
</feature>
<feature type="strand" evidence="8">
    <location>
        <begin position="110"/>
        <end position="116"/>
    </location>
</feature>
<feature type="helix" evidence="8">
    <location>
        <begin position="117"/>
        <end position="119"/>
    </location>
</feature>
<feature type="turn" evidence="8">
    <location>
        <begin position="121"/>
        <end position="123"/>
    </location>
</feature>
<feature type="helix" evidence="8">
    <location>
        <begin position="128"/>
        <end position="138"/>
    </location>
</feature>
<feature type="turn" evidence="8">
    <location>
        <begin position="139"/>
        <end position="141"/>
    </location>
</feature>
<feature type="strand" evidence="8">
    <location>
        <begin position="147"/>
        <end position="151"/>
    </location>
</feature>
<feature type="helix" evidence="8">
    <location>
        <begin position="155"/>
        <end position="166"/>
    </location>
</feature>
<feature type="strand" evidence="8">
    <location>
        <begin position="170"/>
        <end position="176"/>
    </location>
</feature>
<feature type="helix" evidence="8">
    <location>
        <begin position="181"/>
        <end position="189"/>
    </location>
</feature>
<feature type="strand" evidence="8">
    <location>
        <begin position="193"/>
        <end position="199"/>
    </location>
</feature>
<feature type="strand" evidence="6">
    <location>
        <begin position="201"/>
        <end position="203"/>
    </location>
</feature>
<feature type="helix" evidence="8">
    <location>
        <begin position="204"/>
        <end position="206"/>
    </location>
</feature>
<feature type="helix" evidence="8">
    <location>
        <begin position="207"/>
        <end position="217"/>
    </location>
</feature>
<feature type="turn" evidence="8">
    <location>
        <begin position="224"/>
        <end position="226"/>
    </location>
</feature>
<feature type="helix" evidence="8">
    <location>
        <begin position="228"/>
        <end position="236"/>
    </location>
</feature>
<feature type="helix" evidence="8">
    <location>
        <begin position="238"/>
        <end position="249"/>
    </location>
</feature>
<feature type="strand" evidence="8">
    <location>
        <begin position="253"/>
        <end position="258"/>
    </location>
</feature>
<feature type="strand" evidence="8">
    <location>
        <begin position="261"/>
        <end position="263"/>
    </location>
</feature>
<feature type="helix" evidence="8">
    <location>
        <begin position="264"/>
        <end position="276"/>
    </location>
</feature>
<feature type="strand" evidence="8">
    <location>
        <begin position="281"/>
        <end position="287"/>
    </location>
</feature>
<feature type="helix" evidence="8">
    <location>
        <begin position="299"/>
        <end position="301"/>
    </location>
</feature>
<feature type="helix" evidence="8">
    <location>
        <begin position="305"/>
        <end position="308"/>
    </location>
</feature>
<feature type="strand" evidence="8">
    <location>
        <begin position="314"/>
        <end position="318"/>
    </location>
</feature>
<feature type="helix" evidence="8">
    <location>
        <begin position="320"/>
        <end position="334"/>
    </location>
</feature>
<feature type="helix" evidence="8">
    <location>
        <begin position="340"/>
        <end position="355"/>
    </location>
</feature>
<feature type="strand" evidence="8">
    <location>
        <begin position="360"/>
        <end position="367"/>
    </location>
</feature>
<feature type="helix" evidence="8">
    <location>
        <begin position="371"/>
        <end position="373"/>
    </location>
</feature>
<feature type="helix" evidence="8">
    <location>
        <begin position="375"/>
        <end position="382"/>
    </location>
</feature>
<organism>
    <name type="scientific">Aeropyrum pernix (strain ATCC 700893 / DSM 11879 / JCM 9820 / NBRC 100138 / K1)</name>
    <dbReference type="NCBI Taxonomy" id="272557"/>
    <lineage>
        <taxon>Archaea</taxon>
        <taxon>Thermoproteota</taxon>
        <taxon>Thermoprotei</taxon>
        <taxon>Desulfurococcales</taxon>
        <taxon>Desulfurococcaceae</taxon>
        <taxon>Aeropyrum</taxon>
    </lineage>
</organism>
<accession>Q9YBL2</accession>
<name>CYSO_AERPE</name>
<sequence length="389" mass="41981">MALADISGYLDVLDSVRGFSYLENAREVLRSGEARCLGNPRSEPEYVKALYVIGASRIPVGDGCSHTLEELGVFDISVPGEMVFPSPLDFFERGKPTPLVRSRLQLPNGVRVWLKLEWYNPFSLSVKDRPAVEIISRLSRRVEKGSLVADATSSNFGVALSAVARLYGYRARVYLPGAAEEFGKLLPRLLGAQVIVDPEAPSTVHLLPRVMKDSKNEGFVHVNQFYNDANFEAHMRGTAREIFVQSRRGGLALRGVAGSLGTSGHMSAAAFYLQSVDPSIRAVLVQPAQGDSIPGIRRVETGMLWINMLDISYTLAEVTLEEAMEAVVEVARSDGLVIGPSGGAAVKALAKKAAEGDLEPGDYVVVVPDTGFKYLSLVQNALEGAGDSV</sequence>
<keyword id="KW-0002">3D-structure</keyword>
<keyword id="KW-0028">Amino-acid biosynthesis</keyword>
<keyword id="KW-0198">Cysteine biosynthesis</keyword>
<keyword id="KW-0903">Direct protein sequencing</keyword>
<keyword id="KW-0456">Lyase</keyword>
<keyword id="KW-0663">Pyridoxal phosphate</keyword>
<keyword id="KW-1185">Reference proteome</keyword>
<keyword id="KW-0808">Transferase</keyword>
<proteinExistence type="evidence at protein level"/>
<reference key="1">
    <citation type="journal article" date="1999" name="DNA Res.">
        <title>Complete genome sequence of an aerobic hyper-thermophilic crenarchaeon, Aeropyrum pernix K1.</title>
        <authorList>
            <person name="Kawarabayasi Y."/>
            <person name="Hino Y."/>
            <person name="Horikawa H."/>
            <person name="Yamazaki S."/>
            <person name="Haikawa Y."/>
            <person name="Jin-no K."/>
            <person name="Takahashi M."/>
            <person name="Sekine M."/>
            <person name="Baba S."/>
            <person name="Ankai A."/>
            <person name="Kosugi H."/>
            <person name="Hosoyama A."/>
            <person name="Fukui S."/>
            <person name="Nagai Y."/>
            <person name="Nishijima K."/>
            <person name="Nakazawa H."/>
            <person name="Takamiya M."/>
            <person name="Masuda S."/>
            <person name="Funahashi T."/>
            <person name="Tanaka T."/>
            <person name="Kudoh Y."/>
            <person name="Yamazaki J."/>
            <person name="Kushida N."/>
            <person name="Oguchi A."/>
            <person name="Aoki K."/>
            <person name="Kubota K."/>
            <person name="Nakamura Y."/>
            <person name="Nomura N."/>
            <person name="Sako Y."/>
            <person name="Kikuchi H."/>
        </authorList>
    </citation>
    <scope>NUCLEOTIDE SEQUENCE [LARGE SCALE GENOMIC DNA]</scope>
    <source>
        <strain>ATCC 700893 / DSM 11879 / JCM 9820 / NBRC 100138 / K1</strain>
    </source>
</reference>
<reference key="2">
    <citation type="journal article" date="2003" name="J. Bacteriol.">
        <title>Characterization of a novel thermostable O-acetylserine sulfhydrylase from Aeropyrum pernix K1.</title>
        <authorList>
            <person name="Mino K."/>
            <person name="Ishikawa K."/>
        </authorList>
    </citation>
    <scope>PROTEIN SEQUENCE OF 2-8</scope>
    <scope>FUNCTION</scope>
    <scope>CATALYTIC ACTIVITY</scope>
    <scope>SUBUNIT</scope>
    <scope>COFACTOR</scope>
    <scope>BIOPHYSICOCHEMICAL PROPERTIES</scope>
    <source>
        <strain>ATCC 700893 / DSM 11879 / JCM 9820 / NBRC 100138 / K1</strain>
    </source>
</reference>
<reference key="3">
    <citation type="journal article" date="2005" name="J. Mol. Biol.">
        <title>Three-dimensional structure of a new enzyme, O-phosphoserine sulfhydrylase, involved in L-cysteine biosynthesis by a hyperthermophilic archaeon, Aeropyrum pernix K1, at 2.0 A resolution.</title>
        <authorList>
            <person name="Oda Y."/>
            <person name="Mino K."/>
            <person name="Ishikawa K."/>
            <person name="Ataka M."/>
        </authorList>
    </citation>
    <scope>X-RAY CRYSTALLOGRAPHY (2.0 ANGSTROMS) IN COMPLEX WITH PYRIDOXAL PHOSPHATE</scope>
    <scope>CATALYTIC ACTIVITY</scope>
    <source>
        <strain>ATCC 700893 / DSM 11879 / JCM 9820 / NBRC 100138 / K1</strain>
    </source>
</reference>